<gene>
    <name evidence="1" type="primary">rlmB</name>
    <name type="ordered locus">Bfl084</name>
</gene>
<protein>
    <recommendedName>
        <fullName evidence="1">23S rRNA (guanosine-2'-O-)-methyltransferase RlmB</fullName>
        <ecNumber evidence="1">2.1.1.185</ecNumber>
    </recommendedName>
    <alternativeName>
        <fullName evidence="1">23S rRNA (guanosine2251 2'-O)-methyltransferase</fullName>
    </alternativeName>
    <alternativeName>
        <fullName evidence="1">23S rRNA Gm2251 2'-O-methyltransferase</fullName>
    </alternativeName>
</protein>
<accession>Q7VQP0</accession>
<feature type="chain" id="PRO_0000159782" description="23S rRNA (guanosine-2'-O-)-methyltransferase RlmB">
    <location>
        <begin position="1"/>
        <end position="254"/>
    </location>
</feature>
<feature type="binding site" evidence="1">
    <location>
        <position position="198"/>
    </location>
    <ligand>
        <name>S-adenosyl-L-methionine</name>
        <dbReference type="ChEBI" id="CHEBI:59789"/>
    </ligand>
</feature>
<feature type="binding site" evidence="1">
    <location>
        <position position="218"/>
    </location>
    <ligand>
        <name>S-adenosyl-L-methionine</name>
        <dbReference type="ChEBI" id="CHEBI:59789"/>
    </ligand>
</feature>
<feature type="binding site" evidence="1">
    <location>
        <position position="227"/>
    </location>
    <ligand>
        <name>S-adenosyl-L-methionine</name>
        <dbReference type="ChEBI" id="CHEBI:59789"/>
    </ligand>
</feature>
<keyword id="KW-0963">Cytoplasm</keyword>
<keyword id="KW-0489">Methyltransferase</keyword>
<keyword id="KW-1185">Reference proteome</keyword>
<keyword id="KW-0698">rRNA processing</keyword>
<keyword id="KW-0949">S-adenosyl-L-methionine</keyword>
<keyword id="KW-0808">Transferase</keyword>
<organism>
    <name type="scientific">Blochmanniella floridana</name>
    <dbReference type="NCBI Taxonomy" id="203907"/>
    <lineage>
        <taxon>Bacteria</taxon>
        <taxon>Pseudomonadati</taxon>
        <taxon>Pseudomonadota</taxon>
        <taxon>Gammaproteobacteria</taxon>
        <taxon>Enterobacterales</taxon>
        <taxon>Enterobacteriaceae</taxon>
        <taxon>ant endosymbionts</taxon>
        <taxon>Candidatus Blochmanniella</taxon>
    </lineage>
</organism>
<proteinExistence type="inferred from homology"/>
<sequence>MSELVYGIHTVESIVNQSPNRILIVYIVSNPRDLRLKSLIYRIRKMNINIQECTRRVLNIKSMKSAHQGIIAEVIPMPALNEDYLLHFLKTKNNIIPLLLVLDGITDPHNLGACIRSADAAGVHMIIVPRDRSANVNATVRKVASGSSDRVPFVRVTNLSRTLKLLKKYNIYIVGSVLRSNQILFNTRLIDPIALVMGSESSGIRRLTRENCDKLVHIPTLQSTVSLNVSVATGIFLFETVRQRKYQNGFINYS</sequence>
<dbReference type="EC" id="2.1.1.185" evidence="1"/>
<dbReference type="EMBL" id="BX248583">
    <property type="protein sequence ID" value="CAD83607.1"/>
    <property type="molecule type" value="Genomic_DNA"/>
</dbReference>
<dbReference type="SMR" id="Q7VQP0"/>
<dbReference type="STRING" id="203907.Bfl084"/>
<dbReference type="KEGG" id="bfl:Bfl084"/>
<dbReference type="eggNOG" id="COG0566">
    <property type="taxonomic scope" value="Bacteria"/>
</dbReference>
<dbReference type="HOGENOM" id="CLU_021322_0_1_6"/>
<dbReference type="OrthoDB" id="9785673at2"/>
<dbReference type="Proteomes" id="UP000002192">
    <property type="component" value="Chromosome"/>
</dbReference>
<dbReference type="GO" id="GO:0005829">
    <property type="term" value="C:cytosol"/>
    <property type="evidence" value="ECO:0007669"/>
    <property type="project" value="TreeGrafter"/>
</dbReference>
<dbReference type="GO" id="GO:0003723">
    <property type="term" value="F:RNA binding"/>
    <property type="evidence" value="ECO:0007669"/>
    <property type="project" value="InterPro"/>
</dbReference>
<dbReference type="GO" id="GO:0070039">
    <property type="term" value="F:rRNA (guanosine-2'-O-)-methyltransferase activity"/>
    <property type="evidence" value="ECO:0007669"/>
    <property type="project" value="UniProtKB-UniRule"/>
</dbReference>
<dbReference type="CDD" id="cd18103">
    <property type="entry name" value="SpoU-like_RlmB"/>
    <property type="match status" value="1"/>
</dbReference>
<dbReference type="Gene3D" id="3.30.1330.30">
    <property type="match status" value="1"/>
</dbReference>
<dbReference type="Gene3D" id="3.40.1280.10">
    <property type="match status" value="1"/>
</dbReference>
<dbReference type="HAMAP" id="MF_01887">
    <property type="entry name" value="23SrRNA_methyltr_B"/>
    <property type="match status" value="1"/>
</dbReference>
<dbReference type="InterPro" id="IPR024915">
    <property type="entry name" value="23S_rRNA_MeTrfase_RlmB"/>
</dbReference>
<dbReference type="InterPro" id="IPR029028">
    <property type="entry name" value="Alpha/beta_knot_MTases"/>
</dbReference>
<dbReference type="InterPro" id="IPR029064">
    <property type="entry name" value="Ribosomal_eL30-like_sf"/>
</dbReference>
<dbReference type="InterPro" id="IPR004441">
    <property type="entry name" value="rRNA_MeTrfase_TrmH"/>
</dbReference>
<dbReference type="InterPro" id="IPR001537">
    <property type="entry name" value="SpoU_MeTrfase"/>
</dbReference>
<dbReference type="InterPro" id="IPR013123">
    <property type="entry name" value="SpoU_subst-bd"/>
</dbReference>
<dbReference type="InterPro" id="IPR029026">
    <property type="entry name" value="tRNA_m1G_MTases_N"/>
</dbReference>
<dbReference type="NCBIfam" id="TIGR00186">
    <property type="entry name" value="rRNA_methyl_3"/>
    <property type="match status" value="1"/>
</dbReference>
<dbReference type="PANTHER" id="PTHR46429">
    <property type="entry name" value="23S RRNA (GUANOSINE-2'-O-)-METHYLTRANSFERASE RLMB"/>
    <property type="match status" value="1"/>
</dbReference>
<dbReference type="PANTHER" id="PTHR46429:SF1">
    <property type="entry name" value="23S RRNA (GUANOSINE-2'-O-)-METHYLTRANSFERASE RLMB"/>
    <property type="match status" value="1"/>
</dbReference>
<dbReference type="Pfam" id="PF00588">
    <property type="entry name" value="SpoU_methylase"/>
    <property type="match status" value="1"/>
</dbReference>
<dbReference type="Pfam" id="PF08032">
    <property type="entry name" value="SpoU_sub_bind"/>
    <property type="match status" value="1"/>
</dbReference>
<dbReference type="SMART" id="SM00967">
    <property type="entry name" value="SpoU_sub_bind"/>
    <property type="match status" value="1"/>
</dbReference>
<dbReference type="SUPFAM" id="SSF75217">
    <property type="entry name" value="alpha/beta knot"/>
    <property type="match status" value="1"/>
</dbReference>
<dbReference type="SUPFAM" id="SSF55315">
    <property type="entry name" value="L30e-like"/>
    <property type="match status" value="1"/>
</dbReference>
<comment type="function">
    <text evidence="1">Specifically methylates the ribose of guanosine 2251 in 23S rRNA.</text>
</comment>
<comment type="catalytic activity">
    <reaction evidence="1">
        <text>guanosine(2251) in 23S rRNA + S-adenosyl-L-methionine = 2'-O-methylguanosine(2251) in 23S rRNA + S-adenosyl-L-homocysteine + H(+)</text>
        <dbReference type="Rhea" id="RHEA:24140"/>
        <dbReference type="Rhea" id="RHEA-COMP:10239"/>
        <dbReference type="Rhea" id="RHEA-COMP:10241"/>
        <dbReference type="ChEBI" id="CHEBI:15378"/>
        <dbReference type="ChEBI" id="CHEBI:57856"/>
        <dbReference type="ChEBI" id="CHEBI:59789"/>
        <dbReference type="ChEBI" id="CHEBI:74269"/>
        <dbReference type="ChEBI" id="CHEBI:74445"/>
        <dbReference type="EC" id="2.1.1.185"/>
    </reaction>
</comment>
<comment type="subunit">
    <text evidence="1">Homodimer.</text>
</comment>
<comment type="subcellular location">
    <subcellularLocation>
        <location evidence="1">Cytoplasm</location>
    </subcellularLocation>
</comment>
<comment type="similarity">
    <text evidence="1">Belongs to the class IV-like SAM-binding methyltransferase superfamily. RNA methyltransferase TrmH family. RlmB subfamily.</text>
</comment>
<name>RLMB_BLOFL</name>
<evidence type="ECO:0000255" key="1">
    <source>
        <dbReference type="HAMAP-Rule" id="MF_01887"/>
    </source>
</evidence>
<reference key="1">
    <citation type="journal article" date="2003" name="Proc. Natl. Acad. Sci. U.S.A.">
        <title>The genome sequence of Blochmannia floridanus: comparative analysis of reduced genomes.</title>
        <authorList>
            <person name="Gil R."/>
            <person name="Silva F.J."/>
            <person name="Zientz E."/>
            <person name="Delmotte F."/>
            <person name="Gonzalez-Candelas F."/>
            <person name="Latorre A."/>
            <person name="Rausell C."/>
            <person name="Kamerbeek J."/>
            <person name="Gadau J."/>
            <person name="Hoelldobler B."/>
            <person name="van Ham R.C.H.J."/>
            <person name="Gross R."/>
            <person name="Moya A."/>
        </authorList>
    </citation>
    <scope>NUCLEOTIDE SEQUENCE [LARGE SCALE GENOMIC DNA]</scope>
</reference>